<keyword id="KW-0224">Dipeptidase</keyword>
<keyword id="KW-0378">Hydrolase</keyword>
<keyword id="KW-0464">Manganese</keyword>
<keyword id="KW-0479">Metal-binding</keyword>
<keyword id="KW-0482">Metalloprotease</keyword>
<keyword id="KW-0645">Protease</keyword>
<organism>
    <name type="scientific">Salmonella paratyphi A (strain ATCC 9150 / SARB42)</name>
    <dbReference type="NCBI Taxonomy" id="295319"/>
    <lineage>
        <taxon>Bacteria</taxon>
        <taxon>Pseudomonadati</taxon>
        <taxon>Pseudomonadota</taxon>
        <taxon>Gammaproteobacteria</taxon>
        <taxon>Enterobacterales</taxon>
        <taxon>Enterobacteriaceae</taxon>
        <taxon>Salmonella</taxon>
    </lineage>
</organism>
<accession>Q5PKQ1</accession>
<gene>
    <name evidence="1" type="primary">pepQ</name>
    <name type="ordered locus">SPA3824</name>
</gene>
<proteinExistence type="inferred from homology"/>
<feature type="chain" id="PRO_0000303854" description="Xaa-Pro dipeptidase">
    <location>
        <begin position="1"/>
        <end position="443"/>
    </location>
</feature>
<feature type="binding site" evidence="1">
    <location>
        <position position="246"/>
    </location>
    <ligand>
        <name>Mn(2+)</name>
        <dbReference type="ChEBI" id="CHEBI:29035"/>
        <label>2</label>
    </ligand>
</feature>
<feature type="binding site" evidence="1">
    <location>
        <position position="257"/>
    </location>
    <ligand>
        <name>Mn(2+)</name>
        <dbReference type="ChEBI" id="CHEBI:29035"/>
        <label>1</label>
    </ligand>
</feature>
<feature type="binding site" evidence="1">
    <location>
        <position position="257"/>
    </location>
    <ligand>
        <name>Mn(2+)</name>
        <dbReference type="ChEBI" id="CHEBI:29035"/>
        <label>2</label>
    </ligand>
</feature>
<feature type="binding site" evidence="1">
    <location>
        <position position="339"/>
    </location>
    <ligand>
        <name>Mn(2+)</name>
        <dbReference type="ChEBI" id="CHEBI:29035"/>
        <label>1</label>
    </ligand>
</feature>
<feature type="binding site" evidence="1">
    <location>
        <position position="384"/>
    </location>
    <ligand>
        <name>Mn(2+)</name>
        <dbReference type="ChEBI" id="CHEBI:29035"/>
        <label>1</label>
    </ligand>
</feature>
<feature type="binding site" evidence="1">
    <location>
        <position position="423"/>
    </location>
    <ligand>
        <name>Mn(2+)</name>
        <dbReference type="ChEBI" id="CHEBI:29035"/>
        <label>1</label>
    </ligand>
</feature>
<feature type="binding site" evidence="1">
    <location>
        <position position="423"/>
    </location>
    <ligand>
        <name>Mn(2+)</name>
        <dbReference type="ChEBI" id="CHEBI:29035"/>
        <label>2</label>
    </ligand>
</feature>
<reference key="1">
    <citation type="journal article" date="2004" name="Nat. Genet.">
        <title>Comparison of genome degradation in Paratyphi A and Typhi, human-restricted serovars of Salmonella enterica that cause typhoid.</title>
        <authorList>
            <person name="McClelland M."/>
            <person name="Sanderson K.E."/>
            <person name="Clifton S.W."/>
            <person name="Latreille P."/>
            <person name="Porwollik S."/>
            <person name="Sabo A."/>
            <person name="Meyer R."/>
            <person name="Bieri T."/>
            <person name="Ozersky P."/>
            <person name="McLellan M."/>
            <person name="Harkins C.R."/>
            <person name="Wang C."/>
            <person name="Nguyen C."/>
            <person name="Berghoff A."/>
            <person name="Elliott G."/>
            <person name="Kohlberg S."/>
            <person name="Strong C."/>
            <person name="Du F."/>
            <person name="Carter J."/>
            <person name="Kremizki C."/>
            <person name="Layman D."/>
            <person name="Leonard S."/>
            <person name="Sun H."/>
            <person name="Fulton L."/>
            <person name="Nash W."/>
            <person name="Miner T."/>
            <person name="Minx P."/>
            <person name="Delehaunty K."/>
            <person name="Fronick C."/>
            <person name="Magrini V."/>
            <person name="Nhan M."/>
            <person name="Warren W."/>
            <person name="Florea L."/>
            <person name="Spieth J."/>
            <person name="Wilson R.K."/>
        </authorList>
    </citation>
    <scope>NUCLEOTIDE SEQUENCE [LARGE SCALE GENOMIC DNA]</scope>
    <source>
        <strain>ATCC 9150 / SARB42</strain>
    </source>
</reference>
<comment type="function">
    <text evidence="1">Splits dipeptides with a prolyl residue in the C-terminal position.</text>
</comment>
<comment type="catalytic activity">
    <reaction evidence="1">
        <text>Xaa-L-Pro dipeptide + H2O = an L-alpha-amino acid + L-proline</text>
        <dbReference type="Rhea" id="RHEA:76407"/>
        <dbReference type="ChEBI" id="CHEBI:15377"/>
        <dbReference type="ChEBI" id="CHEBI:59869"/>
        <dbReference type="ChEBI" id="CHEBI:60039"/>
        <dbReference type="ChEBI" id="CHEBI:195196"/>
        <dbReference type="EC" id="3.4.13.9"/>
    </reaction>
</comment>
<comment type="cofactor">
    <cofactor evidence="1">
        <name>Mn(2+)</name>
        <dbReference type="ChEBI" id="CHEBI:29035"/>
    </cofactor>
    <text evidence="1">Binds 2 manganese ions per subunit.</text>
</comment>
<comment type="similarity">
    <text evidence="1">Belongs to the peptidase M24B family. Bacterial-type prolidase subfamily.</text>
</comment>
<evidence type="ECO:0000255" key="1">
    <source>
        <dbReference type="HAMAP-Rule" id="MF_01279"/>
    </source>
</evidence>
<dbReference type="EC" id="3.4.13.9" evidence="1"/>
<dbReference type="EMBL" id="CP000026">
    <property type="protein sequence ID" value="AAV79599.1"/>
    <property type="molecule type" value="Genomic_DNA"/>
</dbReference>
<dbReference type="RefSeq" id="WP_000444529.1">
    <property type="nucleotide sequence ID" value="NC_006511.1"/>
</dbReference>
<dbReference type="SMR" id="Q5PKQ1"/>
<dbReference type="MEROPS" id="M24.003"/>
<dbReference type="KEGG" id="spt:SPA3824"/>
<dbReference type="HOGENOM" id="CLU_050675_0_0_6"/>
<dbReference type="Proteomes" id="UP000008185">
    <property type="component" value="Chromosome"/>
</dbReference>
<dbReference type="GO" id="GO:0005829">
    <property type="term" value="C:cytosol"/>
    <property type="evidence" value="ECO:0007669"/>
    <property type="project" value="TreeGrafter"/>
</dbReference>
<dbReference type="GO" id="GO:0004177">
    <property type="term" value="F:aminopeptidase activity"/>
    <property type="evidence" value="ECO:0007669"/>
    <property type="project" value="TreeGrafter"/>
</dbReference>
<dbReference type="GO" id="GO:0046872">
    <property type="term" value="F:metal ion binding"/>
    <property type="evidence" value="ECO:0007669"/>
    <property type="project" value="UniProtKB-KW"/>
</dbReference>
<dbReference type="GO" id="GO:0008235">
    <property type="term" value="F:metalloexopeptidase activity"/>
    <property type="evidence" value="ECO:0007669"/>
    <property type="project" value="UniProtKB-UniRule"/>
</dbReference>
<dbReference type="GO" id="GO:0016795">
    <property type="term" value="F:phosphoric triester hydrolase activity"/>
    <property type="evidence" value="ECO:0007669"/>
    <property type="project" value="InterPro"/>
</dbReference>
<dbReference type="GO" id="GO:0102009">
    <property type="term" value="F:proline dipeptidase activity"/>
    <property type="evidence" value="ECO:0007669"/>
    <property type="project" value="UniProtKB-EC"/>
</dbReference>
<dbReference type="GO" id="GO:0006508">
    <property type="term" value="P:proteolysis"/>
    <property type="evidence" value="ECO:0007669"/>
    <property type="project" value="UniProtKB-KW"/>
</dbReference>
<dbReference type="CDD" id="cd01087">
    <property type="entry name" value="Prolidase"/>
    <property type="match status" value="1"/>
</dbReference>
<dbReference type="FunFam" id="3.40.350.10:FF:000002">
    <property type="entry name" value="Xaa-Pro dipeptidase"/>
    <property type="match status" value="1"/>
</dbReference>
<dbReference type="FunFam" id="3.90.230.10:FF:000006">
    <property type="entry name" value="Xaa-Pro dipeptidase"/>
    <property type="match status" value="1"/>
</dbReference>
<dbReference type="Gene3D" id="3.90.230.10">
    <property type="entry name" value="Creatinase/methionine aminopeptidase superfamily"/>
    <property type="match status" value="1"/>
</dbReference>
<dbReference type="Gene3D" id="3.40.350.10">
    <property type="entry name" value="Creatinase/prolidase N-terminal domain"/>
    <property type="match status" value="1"/>
</dbReference>
<dbReference type="HAMAP" id="MF_01279">
    <property type="entry name" value="X_Pro_dipeptid"/>
    <property type="match status" value="1"/>
</dbReference>
<dbReference type="InterPro" id="IPR029149">
    <property type="entry name" value="Creatin/AminoP/Spt16_N"/>
</dbReference>
<dbReference type="InterPro" id="IPR036005">
    <property type="entry name" value="Creatinase/aminopeptidase-like"/>
</dbReference>
<dbReference type="InterPro" id="IPR048819">
    <property type="entry name" value="PepQ_N"/>
</dbReference>
<dbReference type="InterPro" id="IPR000994">
    <property type="entry name" value="Pept_M24"/>
</dbReference>
<dbReference type="InterPro" id="IPR001131">
    <property type="entry name" value="Peptidase_M24B_aminopep-P_CS"/>
</dbReference>
<dbReference type="InterPro" id="IPR052433">
    <property type="entry name" value="X-Pro_dipept-like"/>
</dbReference>
<dbReference type="InterPro" id="IPR022846">
    <property type="entry name" value="X_Pro_dipept"/>
</dbReference>
<dbReference type="NCBIfam" id="NF010133">
    <property type="entry name" value="PRK13607.1"/>
    <property type="match status" value="1"/>
</dbReference>
<dbReference type="PANTHER" id="PTHR43226">
    <property type="entry name" value="XAA-PRO AMINOPEPTIDASE 3"/>
    <property type="match status" value="1"/>
</dbReference>
<dbReference type="PANTHER" id="PTHR43226:SF8">
    <property type="entry name" value="XAA-PRO DIPEPTIDASE"/>
    <property type="match status" value="1"/>
</dbReference>
<dbReference type="Pfam" id="PF21216">
    <property type="entry name" value="PepQ_N"/>
    <property type="match status" value="1"/>
</dbReference>
<dbReference type="Pfam" id="PF00557">
    <property type="entry name" value="Peptidase_M24"/>
    <property type="match status" value="1"/>
</dbReference>
<dbReference type="SUPFAM" id="SSF55920">
    <property type="entry name" value="Creatinase/aminopeptidase"/>
    <property type="match status" value="1"/>
</dbReference>
<dbReference type="PROSITE" id="PS00491">
    <property type="entry name" value="PROLINE_PEPTIDASE"/>
    <property type="match status" value="1"/>
</dbReference>
<name>PEPQ_SALPA</name>
<protein>
    <recommendedName>
        <fullName evidence="1">Xaa-Pro dipeptidase</fullName>
        <shortName evidence="1">X-Pro dipeptidase</shortName>
        <ecNumber evidence="1">3.4.13.9</ecNumber>
    </recommendedName>
    <alternativeName>
        <fullName evidence="1">Imidodipeptidase</fullName>
    </alternativeName>
    <alternativeName>
        <fullName evidence="1">Proline dipeptidase</fullName>
        <shortName evidence="1">Prolidase</shortName>
    </alternativeName>
</protein>
<sequence>MESLAALYKNHIVTLQERTRDVLARFKLDALLIHSGELFNVFLDDHPYPFKVNPQFKAWVPVTQVPNCWLLVDGVNKPKLWFYLPVDYWHNVEPLPTSFWTEEVEVVALPKADGIGSQLPAARGNIGYIGPVPERALQLDIAASNINPKGVIDYLHYYRAYKTDYELACMREAQKMAVSGHRAAEEAFRSGMSEFDINLAYLTATGHRDTDVPYSNIVALNEHAAVLHYTKLDHQAPSEMRSFLLDAGAEYNGYAADLTRTWSAKSDNDYAHLVKDVNDEQLALIATMKAGVSYVDYHIQFHQRIAKLLRKHQIITDMSEEAMVENDLTGPFMPHGIGHPLGLQVHDVAGFMQDDSGTHLAAPSKYPYLRCTRVLQPRMVLTIEPGIYFIESLLAPWREGPFSKHFNWQKIEALKPFGGIRIEDNVVIHENGVENMTRDLKLA</sequence>